<proteinExistence type="inferred from homology"/>
<evidence type="ECO:0000255" key="1">
    <source>
        <dbReference type="HAMAP-Rule" id="MF_00530"/>
    </source>
</evidence>
<reference key="1">
    <citation type="journal article" date="2006" name="Transgenic Res.">
        <title>Efficient and stable transformation of Lactuca sativa L. cv. Cisco (lettuce) plastids.</title>
        <authorList>
            <person name="Kanamoto H."/>
            <person name="Yamashita A."/>
            <person name="Asao H."/>
            <person name="Okumura S."/>
            <person name="Takase H."/>
            <person name="Hattori M."/>
            <person name="Yokota A."/>
            <person name="Tomizawa K."/>
        </authorList>
    </citation>
    <scope>NUCLEOTIDE SEQUENCE [LARGE SCALE GENOMIC DNA]</scope>
    <source>
        <strain>cv. Cisco</strain>
    </source>
</reference>
<reference key="2">
    <citation type="submission" date="2006-01" db="EMBL/GenBank/DDBJ databases">
        <title>A comparison of the first two published chloroplast genomes in Asteraceae: Lactuca and Helianthus.</title>
        <authorList>
            <person name="Timme R.E."/>
            <person name="Kuehl J.V."/>
            <person name="Boore J.L."/>
            <person name="Jansen R.K."/>
        </authorList>
    </citation>
    <scope>NUCLEOTIDE SEQUENCE [LARGE SCALE GENOMIC DNA]</scope>
    <source>
        <strain>cv. Salinas</strain>
    </source>
</reference>
<gene>
    <name evidence="1" type="primary">atpE</name>
</gene>
<protein>
    <recommendedName>
        <fullName evidence="1">ATP synthase epsilon chain, chloroplastic</fullName>
    </recommendedName>
    <alternativeName>
        <fullName evidence="1">ATP synthase F1 sector epsilon subunit</fullName>
    </alternativeName>
    <alternativeName>
        <fullName evidence="1">F-ATPase epsilon subunit</fullName>
    </alternativeName>
</protein>
<dbReference type="EMBL" id="AP007232">
    <property type="protein sequence ID" value="BAE47600.1"/>
    <property type="molecule type" value="Genomic_DNA"/>
</dbReference>
<dbReference type="EMBL" id="DQ383816">
    <property type="protein sequence ID" value="ABD47239.1"/>
    <property type="molecule type" value="Genomic_DNA"/>
</dbReference>
<dbReference type="RefSeq" id="YP_398335.1">
    <property type="nucleotide sequence ID" value="NC_007578.1"/>
</dbReference>
<dbReference type="SMR" id="Q332X2"/>
<dbReference type="EnsemblPlants" id="rna-gnl|WGS:NBSK|LSAT_7X68801_mrna">
    <property type="protein sequence ID" value="cds-PLY90279.1"/>
    <property type="gene ID" value="gene-LSAT_7X68801"/>
</dbReference>
<dbReference type="GeneID" id="3772853"/>
<dbReference type="Gramene" id="rna-gnl|WGS:NBSK|LSAT_7X68801_mrna">
    <property type="protein sequence ID" value="cds-PLY90279.1"/>
    <property type="gene ID" value="gene-LSAT_7X68801"/>
</dbReference>
<dbReference type="KEGG" id="lsv:3772853"/>
<dbReference type="OrthoDB" id="423436at2759"/>
<dbReference type="GO" id="GO:0009535">
    <property type="term" value="C:chloroplast thylakoid membrane"/>
    <property type="evidence" value="ECO:0007669"/>
    <property type="project" value="UniProtKB-SubCell"/>
</dbReference>
<dbReference type="GO" id="GO:0045259">
    <property type="term" value="C:proton-transporting ATP synthase complex"/>
    <property type="evidence" value="ECO:0007669"/>
    <property type="project" value="UniProtKB-KW"/>
</dbReference>
<dbReference type="GO" id="GO:0005524">
    <property type="term" value="F:ATP binding"/>
    <property type="evidence" value="ECO:0007669"/>
    <property type="project" value="UniProtKB-UniRule"/>
</dbReference>
<dbReference type="GO" id="GO:0046933">
    <property type="term" value="F:proton-transporting ATP synthase activity, rotational mechanism"/>
    <property type="evidence" value="ECO:0007669"/>
    <property type="project" value="UniProtKB-UniRule"/>
</dbReference>
<dbReference type="CDD" id="cd12152">
    <property type="entry name" value="F1-ATPase_delta"/>
    <property type="match status" value="1"/>
</dbReference>
<dbReference type="FunFam" id="2.60.15.10:FF:000002">
    <property type="entry name" value="ATP synthase epsilon chain, chloroplastic"/>
    <property type="match status" value="1"/>
</dbReference>
<dbReference type="Gene3D" id="6.10.140.480">
    <property type="match status" value="1"/>
</dbReference>
<dbReference type="Gene3D" id="2.60.15.10">
    <property type="entry name" value="F0F1 ATP synthase delta/epsilon subunit, N-terminal"/>
    <property type="match status" value="1"/>
</dbReference>
<dbReference type="HAMAP" id="MF_00530">
    <property type="entry name" value="ATP_synth_epsil_bac"/>
    <property type="match status" value="1"/>
</dbReference>
<dbReference type="InterPro" id="IPR001469">
    <property type="entry name" value="ATP_synth_F1_dsu/esu"/>
</dbReference>
<dbReference type="InterPro" id="IPR020546">
    <property type="entry name" value="ATP_synth_F1_dsu/esu_N"/>
</dbReference>
<dbReference type="InterPro" id="IPR020547">
    <property type="entry name" value="ATP_synth_F1_esu_C"/>
</dbReference>
<dbReference type="InterPro" id="IPR036771">
    <property type="entry name" value="ATPsynth_dsu/esu_N"/>
</dbReference>
<dbReference type="NCBIfam" id="TIGR01216">
    <property type="entry name" value="ATP_synt_epsi"/>
    <property type="match status" value="1"/>
</dbReference>
<dbReference type="PANTHER" id="PTHR13822">
    <property type="entry name" value="ATP SYNTHASE DELTA/EPSILON CHAIN"/>
    <property type="match status" value="1"/>
</dbReference>
<dbReference type="PANTHER" id="PTHR13822:SF10">
    <property type="entry name" value="ATP SYNTHASE EPSILON CHAIN, CHLOROPLASTIC"/>
    <property type="match status" value="1"/>
</dbReference>
<dbReference type="Pfam" id="PF00401">
    <property type="entry name" value="ATP-synt_DE"/>
    <property type="match status" value="1"/>
</dbReference>
<dbReference type="Pfam" id="PF02823">
    <property type="entry name" value="ATP-synt_DE_N"/>
    <property type="match status" value="1"/>
</dbReference>
<dbReference type="SUPFAM" id="SSF51344">
    <property type="entry name" value="Epsilon subunit of F1F0-ATP synthase N-terminal domain"/>
    <property type="match status" value="1"/>
</dbReference>
<geneLocation type="chloroplast"/>
<feature type="chain" id="PRO_0000275204" description="ATP synthase epsilon chain, chloroplastic">
    <location>
        <begin position="1"/>
        <end position="133"/>
    </location>
</feature>
<name>ATPE_LACSA</name>
<keyword id="KW-0066">ATP synthesis</keyword>
<keyword id="KW-0139">CF(1)</keyword>
<keyword id="KW-0150">Chloroplast</keyword>
<keyword id="KW-0375">Hydrogen ion transport</keyword>
<keyword id="KW-0406">Ion transport</keyword>
<keyword id="KW-0472">Membrane</keyword>
<keyword id="KW-0934">Plastid</keyword>
<keyword id="KW-0793">Thylakoid</keyword>
<keyword id="KW-0813">Transport</keyword>
<accession>Q332X2</accession>
<organism>
    <name type="scientific">Lactuca sativa</name>
    <name type="common">Garden lettuce</name>
    <dbReference type="NCBI Taxonomy" id="4236"/>
    <lineage>
        <taxon>Eukaryota</taxon>
        <taxon>Viridiplantae</taxon>
        <taxon>Streptophyta</taxon>
        <taxon>Embryophyta</taxon>
        <taxon>Tracheophyta</taxon>
        <taxon>Spermatophyta</taxon>
        <taxon>Magnoliopsida</taxon>
        <taxon>eudicotyledons</taxon>
        <taxon>Gunneridae</taxon>
        <taxon>Pentapetalae</taxon>
        <taxon>asterids</taxon>
        <taxon>campanulids</taxon>
        <taxon>Asterales</taxon>
        <taxon>Asteraceae</taxon>
        <taxon>Cichorioideae</taxon>
        <taxon>Cichorieae</taxon>
        <taxon>Lactucinae</taxon>
        <taxon>Lactuca</taxon>
    </lineage>
</organism>
<comment type="function">
    <text evidence="1">Produces ATP from ADP in the presence of a proton gradient across the membrane.</text>
</comment>
<comment type="subunit">
    <text evidence="1">F-type ATPases have 2 components, CF(1) - the catalytic core - and CF(0) - the membrane proton channel. CF(1) has five subunits: alpha(3), beta(3), gamma(1), delta(1), epsilon(1). CF(0) has three main subunits: a, b and c.</text>
</comment>
<comment type="subcellular location">
    <subcellularLocation>
        <location evidence="1">Plastid</location>
        <location evidence="1">Chloroplast thylakoid membrane</location>
        <topology evidence="1">Peripheral membrane protein</topology>
    </subcellularLocation>
</comment>
<comment type="similarity">
    <text evidence="1">Belongs to the ATPase epsilon chain family.</text>
</comment>
<sequence>MTLNLCVLTPNRIVWDSEVKEIILSTNSGQIGVLPNHAPIATSVDIGILRIRLNDQWLTMALMGGFARIGNNEITVLVNDAEKSGDIDPQEAQQTLEIAEAALRKAEGKRQTIEANLALRRARTRVEAINAIS</sequence>